<reference key="1">
    <citation type="journal article" date="1998" name="Microb. Comp. Genomics">
        <title>First report on the systematic sequencing of the small genome of Encephalitozoon cuniculi (Protozoa, Microspora): gene organization of a 4.3 kbp region on chromosome I.</title>
        <authorList>
            <person name="Duffieux F."/>
            <person name="Peyret P."/>
            <person name="Roe B.A."/>
            <person name="Vivares C.P."/>
        </authorList>
    </citation>
    <scope>NUCLEOTIDE SEQUENCE [GENOMIC DNA]</scope>
</reference>
<reference key="2">
    <citation type="journal article" date="2001" name="Genome Res.">
        <title>Sequence and analysis of chromosome I of the amitochondriate intracellular parasite Encephalitozoon cuniculi (Microspora).</title>
        <authorList>
            <person name="Peyret P."/>
            <person name="Katinka M.D."/>
            <person name="Duprat S."/>
            <person name="Duffieux F."/>
            <person name="Barbe V."/>
            <person name="Barbazanges M."/>
            <person name="Weissenbach J."/>
            <person name="Saurin W."/>
            <person name="Vivares C.P."/>
        </authorList>
    </citation>
    <scope>NUCLEOTIDE SEQUENCE [LARGE SCALE GENOMIC DNA]</scope>
    <source>
        <strain>GB-M1</strain>
    </source>
</reference>
<reference key="3">
    <citation type="journal article" date="2001" name="Nature">
        <title>Genome sequence and gene compaction of the eukaryote parasite Encephalitozoon cuniculi.</title>
        <authorList>
            <person name="Katinka M.D."/>
            <person name="Duprat S."/>
            <person name="Cornillot E."/>
            <person name="Metenier G."/>
            <person name="Thomarat F."/>
            <person name="Prensier G."/>
            <person name="Barbe V."/>
            <person name="Peyretaillade E."/>
            <person name="Brottier P."/>
            <person name="Wincker P."/>
            <person name="Delbac F."/>
            <person name="El Alaoui H."/>
            <person name="Peyret P."/>
            <person name="Saurin W."/>
            <person name="Gouy M."/>
            <person name="Weissenbach J."/>
            <person name="Vivares C.P."/>
        </authorList>
    </citation>
    <scope>NUCLEOTIDE SEQUENCE [LARGE SCALE GENOMIC DNA]</scope>
    <source>
        <strain>GB-M1</strain>
    </source>
</reference>
<proteinExistence type="inferred from homology"/>
<name>DYR_ENCCU</name>
<organism>
    <name type="scientific">Encephalitozoon cuniculi (strain GB-M1)</name>
    <name type="common">Microsporidian parasite</name>
    <dbReference type="NCBI Taxonomy" id="284813"/>
    <lineage>
        <taxon>Eukaryota</taxon>
        <taxon>Fungi</taxon>
        <taxon>Fungi incertae sedis</taxon>
        <taxon>Microsporidia</taxon>
        <taxon>Unikaryonidae</taxon>
        <taxon>Encephalitozoon</taxon>
    </lineage>
</organism>
<accession>O62583</accession>
<feature type="chain" id="PRO_0000186373" description="Dihydrofolate reductase">
    <location>
        <begin position="1"/>
        <end position="205"/>
    </location>
</feature>
<feature type="domain" description="DHFR" evidence="2">
    <location>
        <begin position="1"/>
        <end position="201"/>
    </location>
</feature>
<feature type="binding site" evidence="1">
    <location>
        <position position="7"/>
    </location>
    <ligand>
        <name>NADP(+)</name>
        <dbReference type="ChEBI" id="CHEBI:58349"/>
    </ligand>
</feature>
<feature type="binding site" evidence="1">
    <location>
        <begin position="13"/>
        <end position="19"/>
    </location>
    <ligand>
        <name>NADP(+)</name>
        <dbReference type="ChEBI" id="CHEBI:58349"/>
    </ligand>
</feature>
<feature type="binding site" evidence="1">
    <location>
        <begin position="29"/>
        <end position="34"/>
    </location>
    <ligand>
        <name>substrate</name>
    </ligand>
</feature>
<feature type="binding site" evidence="1">
    <location>
        <begin position="62"/>
        <end position="64"/>
    </location>
    <ligand>
        <name>NADP(+)</name>
        <dbReference type="ChEBI" id="CHEBI:58349"/>
    </ligand>
</feature>
<feature type="binding site" evidence="1">
    <location>
        <position position="78"/>
    </location>
    <ligand>
        <name>substrate</name>
    </ligand>
</feature>
<feature type="binding site" evidence="1">
    <location>
        <begin position="84"/>
        <end position="86"/>
    </location>
    <ligand>
        <name>NADP(+)</name>
        <dbReference type="ChEBI" id="CHEBI:58349"/>
    </ligand>
</feature>
<feature type="binding site" evidence="1">
    <location>
        <begin position="118"/>
        <end position="125"/>
    </location>
    <ligand>
        <name>NADP(+)</name>
        <dbReference type="ChEBI" id="CHEBI:58349"/>
    </ligand>
</feature>
<evidence type="ECO:0000250" key="1"/>
<evidence type="ECO:0000255" key="2">
    <source>
        <dbReference type="PROSITE-ProRule" id="PRU00660"/>
    </source>
</evidence>
<evidence type="ECO:0000305" key="3"/>
<protein>
    <recommendedName>
        <fullName>Dihydrofolate reductase</fullName>
        <ecNumber>1.5.1.3</ecNumber>
    </recommendedName>
</protein>
<comment type="function">
    <text evidence="1">Key enzyme in folate metabolism. Catalyzes an essential reaction for de novo glycine and purine synthesis, and for DNA precursor synthesis (By similarity).</text>
</comment>
<comment type="catalytic activity">
    <reaction evidence="2">
        <text>(6S)-5,6,7,8-tetrahydrofolate + NADP(+) = 7,8-dihydrofolate + NADPH + H(+)</text>
        <dbReference type="Rhea" id="RHEA:15009"/>
        <dbReference type="ChEBI" id="CHEBI:15378"/>
        <dbReference type="ChEBI" id="CHEBI:57451"/>
        <dbReference type="ChEBI" id="CHEBI:57453"/>
        <dbReference type="ChEBI" id="CHEBI:57783"/>
        <dbReference type="ChEBI" id="CHEBI:58349"/>
        <dbReference type="EC" id="1.5.1.3"/>
    </reaction>
</comment>
<comment type="pathway">
    <text>Cofactor biosynthesis; tetrahydrofolate biosynthesis; 5,6,7,8-tetrahydrofolate from 7,8-dihydrofolate: step 1/1.</text>
</comment>
<comment type="similarity">
    <text evidence="3">Belongs to the dihydrofolate reductase family.</text>
</comment>
<keyword id="KW-0521">NADP</keyword>
<keyword id="KW-0554">One-carbon metabolism</keyword>
<keyword id="KW-0560">Oxidoreductase</keyword>
<keyword id="KW-1185">Reference proteome</keyword>
<gene>
    <name type="primary">DHFR-1</name>
    <name type="ordered locus">ECU01_0170</name>
</gene>
<gene>
    <name type="primary">DHFR-2</name>
    <name type="ordered locus">ECU01_1450</name>
</gene>
<gene>
    <name type="primary">DHFR-3</name>
    <name type="ordered locus">ECU08_0080</name>
</gene>
<sequence length="205" mass="22883">MLALVVALASHRGIGNANALPWPRPLAADMAWFRTLSQSIPLISPDRIALAPSASNAVVMGRRTWDSIPSRFRPLANRINVVLSRGPARSTENTFFIQTFEALDSLPLPPSSMTFVIGGRDVYSLALESGRPHLIFATEVFESPECDVFFPHIDWASYEKRDITRDVSRLIDRTLASAFYSPETATFTENGTSFKMFLYTKPETR</sequence>
<dbReference type="EC" id="1.5.1.3"/>
<dbReference type="EMBL" id="AJ005644">
    <property type="protein sequence ID" value="CAA06647.1"/>
    <property type="molecule type" value="Genomic_DNA"/>
</dbReference>
<dbReference type="EMBL" id="AL391737">
    <property type="protein sequence ID" value="CAD24887.1"/>
    <property type="molecule type" value="Genomic_DNA"/>
</dbReference>
<dbReference type="EMBL" id="AL391737">
    <property type="protein sequence ID" value="CAD25017.1"/>
    <property type="molecule type" value="Genomic_DNA"/>
</dbReference>
<dbReference type="EMBL" id="AL590448">
    <property type="protein sequence ID" value="CAD26313.1"/>
    <property type="molecule type" value="Genomic_DNA"/>
</dbReference>
<dbReference type="RefSeq" id="NP_597137.1">
    <property type="nucleotide sequence ID" value="NM_001041746.1"/>
</dbReference>
<dbReference type="RefSeq" id="XP_965852.1">
    <property type="nucleotide sequence ID" value="XM_960759.1"/>
</dbReference>
<dbReference type="RefSeq" id="XP_965982.1">
    <property type="nucleotide sequence ID" value="XM_960889.1"/>
</dbReference>
<dbReference type="SMR" id="O62583"/>
<dbReference type="STRING" id="284813.O62583"/>
<dbReference type="GeneID" id="859559"/>
<dbReference type="KEGG" id="ecu:ECU08_0080"/>
<dbReference type="VEuPathDB" id="MicrosporidiaDB:ECU01_0170"/>
<dbReference type="VEuPathDB" id="MicrosporidiaDB:ECU01_1450"/>
<dbReference type="VEuPathDB" id="MicrosporidiaDB:ECU08_0080"/>
<dbReference type="HOGENOM" id="CLU_043966_2_1_1"/>
<dbReference type="InParanoid" id="O62583"/>
<dbReference type="OMA" id="NANALPW"/>
<dbReference type="OrthoDB" id="2190285at2759"/>
<dbReference type="UniPathway" id="UPA00077">
    <property type="reaction ID" value="UER00158"/>
</dbReference>
<dbReference type="Proteomes" id="UP000000819">
    <property type="component" value="Chromosome I"/>
</dbReference>
<dbReference type="Proteomes" id="UP000000819">
    <property type="component" value="Chromosome VIII"/>
</dbReference>
<dbReference type="GO" id="GO:0005739">
    <property type="term" value="C:mitochondrion"/>
    <property type="evidence" value="ECO:0007669"/>
    <property type="project" value="TreeGrafter"/>
</dbReference>
<dbReference type="GO" id="GO:0004146">
    <property type="term" value="F:dihydrofolate reductase activity"/>
    <property type="evidence" value="ECO:0007669"/>
    <property type="project" value="UniProtKB-EC"/>
</dbReference>
<dbReference type="GO" id="GO:0050661">
    <property type="term" value="F:NADP binding"/>
    <property type="evidence" value="ECO:0007669"/>
    <property type="project" value="InterPro"/>
</dbReference>
<dbReference type="GO" id="GO:0046452">
    <property type="term" value="P:dihydrofolate metabolic process"/>
    <property type="evidence" value="ECO:0007669"/>
    <property type="project" value="TreeGrafter"/>
</dbReference>
<dbReference type="GO" id="GO:0046655">
    <property type="term" value="P:folic acid metabolic process"/>
    <property type="evidence" value="ECO:0007669"/>
    <property type="project" value="TreeGrafter"/>
</dbReference>
<dbReference type="GO" id="GO:0006730">
    <property type="term" value="P:one-carbon metabolic process"/>
    <property type="evidence" value="ECO:0007669"/>
    <property type="project" value="UniProtKB-KW"/>
</dbReference>
<dbReference type="GO" id="GO:0046654">
    <property type="term" value="P:tetrahydrofolate biosynthetic process"/>
    <property type="evidence" value="ECO:0007669"/>
    <property type="project" value="UniProtKB-UniPathway"/>
</dbReference>
<dbReference type="CDD" id="cd00209">
    <property type="entry name" value="DHFR"/>
    <property type="match status" value="1"/>
</dbReference>
<dbReference type="Gene3D" id="3.40.430.10">
    <property type="entry name" value="Dihydrofolate Reductase, subunit A"/>
    <property type="match status" value="1"/>
</dbReference>
<dbReference type="InterPro" id="IPR012259">
    <property type="entry name" value="DHFR"/>
</dbReference>
<dbReference type="InterPro" id="IPR024072">
    <property type="entry name" value="DHFR-like_dom_sf"/>
</dbReference>
<dbReference type="InterPro" id="IPR001796">
    <property type="entry name" value="DHFR_dom"/>
</dbReference>
<dbReference type="PANTHER" id="PTHR48069">
    <property type="entry name" value="DIHYDROFOLATE REDUCTASE"/>
    <property type="match status" value="1"/>
</dbReference>
<dbReference type="PANTHER" id="PTHR48069:SF3">
    <property type="entry name" value="DIHYDROFOLATE REDUCTASE"/>
    <property type="match status" value="1"/>
</dbReference>
<dbReference type="Pfam" id="PF00186">
    <property type="entry name" value="DHFR_1"/>
    <property type="match status" value="1"/>
</dbReference>
<dbReference type="PRINTS" id="PR00070">
    <property type="entry name" value="DHFR"/>
</dbReference>
<dbReference type="SUPFAM" id="SSF53597">
    <property type="entry name" value="Dihydrofolate reductase-like"/>
    <property type="match status" value="1"/>
</dbReference>
<dbReference type="PROSITE" id="PS51330">
    <property type="entry name" value="DHFR_2"/>
    <property type="match status" value="1"/>
</dbReference>